<keyword id="KW-1003">Cell membrane</keyword>
<keyword id="KW-1015">Disulfide bond</keyword>
<keyword id="KW-0325">Glycoprotein</keyword>
<keyword id="KW-0372">Hormone</keyword>
<keyword id="KW-0472">Membrane</keyword>
<keyword id="KW-0675">Receptor</keyword>
<keyword id="KW-1185">Reference proteome</keyword>
<keyword id="KW-0732">Signal</keyword>
<keyword id="KW-0812">Transmembrane</keyword>
<keyword id="KW-1133">Transmembrane helix</keyword>
<accession>D3ZB94</accession>
<comment type="function">
    <text evidence="1 5 6 7 8">Brainstem-restricted receptor for GDF15 hormone, which triggers an aversive response, characterized by nausea, vomiting, and/or loss of appetite in response to various stresses (PubMed:28846098, PubMed:28846099, PubMed:31928886, PubMed:37060902). The aversive response is both required to reduce continuing exposure to those stresses at the time of exposure and to promote avoidance behavior in the future (By similarity). The GDF15-GFRAL aversive response is triggered by stresses, such as anticancer drugs (camptothecin or cisplatin), cancers or drugs such as metformin (PubMed:37060902). Upon interaction with its ligand, GDF15, mediates the GDF15-induced autophosphorylation and activation of the RET tyrosine kinase receptor, leading to activation of MAPK- and AKT- signaling pathways (By similarity). Ligand-binding activates GFRAL-expressing neurons localized in the area postrema and nucleus tractus solitarius of the brainstem (By similarity). The GDF15-GFRAL signal induces expression of genes involved in metabolism, such as lipid metabolism in adipose tissues (By similarity).</text>
</comment>
<comment type="subunit">
    <text evidence="1">Interacts (via the extracellular domain) with GDF15 and RET; receptor of GDF15, mediates cellular signaling through interaction with RET after GDF15-binding. Interaction with RET requires previous GDF15-binding.</text>
</comment>
<comment type="subcellular location">
    <subcellularLocation>
        <location evidence="11">Cell membrane</location>
        <topology evidence="3">Single-pass membrane protein</topology>
        <orientation evidence="11">Extracellular side</orientation>
    </subcellularLocation>
</comment>
<comment type="tissue specificity">
    <text evidence="4 6">Expressed in the brainstem, restricted to cells in the area postrema and the immediately adjacent region of the nucleus tractus solitarius (PubMed:28846097, PubMed:28846099). Detected at low levels in testis (PubMed:28846099).</text>
</comment>
<comment type="PTM">
    <text evidence="2">Cleaved and inactivated by MMP14, inhibiting the GDF15-GFRAL aversive response.</text>
</comment>
<comment type="similarity">
    <text evidence="10">Belongs to the GDNFR family.</text>
</comment>
<dbReference type="EMBL" id="AABR07070759">
    <property type="status" value="NOT_ANNOTATED_CDS"/>
    <property type="molecule type" value="Genomic_DNA"/>
</dbReference>
<dbReference type="EMBL" id="AABR07070760">
    <property type="status" value="NOT_ANNOTATED_CDS"/>
    <property type="molecule type" value="Genomic_DNA"/>
</dbReference>
<dbReference type="RefSeq" id="NP_001178927.1">
    <property type="nucleotide sequence ID" value="NM_001191998.2"/>
</dbReference>
<dbReference type="SMR" id="D3ZB94"/>
<dbReference type="FunCoup" id="D3ZB94">
    <property type="interactions" value="3"/>
</dbReference>
<dbReference type="STRING" id="10116.ENSRNOP00000043286"/>
<dbReference type="GlyCosmos" id="D3ZB94">
    <property type="glycosylation" value="3 sites, No reported glycans"/>
</dbReference>
<dbReference type="GlyGen" id="D3ZB94">
    <property type="glycosylation" value="3 sites"/>
</dbReference>
<dbReference type="PaxDb" id="10116-ENSRNOP00000043286"/>
<dbReference type="GeneID" id="501023"/>
<dbReference type="KEGG" id="rno:501023"/>
<dbReference type="AGR" id="RGD:1565220"/>
<dbReference type="CTD" id="389400"/>
<dbReference type="RGD" id="1565220">
    <property type="gene designation" value="Gfral"/>
</dbReference>
<dbReference type="VEuPathDB" id="HostDB:ENSRNOG00000032063"/>
<dbReference type="eggNOG" id="ENOG502RCJT">
    <property type="taxonomic scope" value="Eukaryota"/>
</dbReference>
<dbReference type="HOGENOM" id="CLU_058745_1_0_1"/>
<dbReference type="InParanoid" id="D3ZB94"/>
<dbReference type="TreeFam" id="TF331647"/>
<dbReference type="PRO" id="PR:D3ZB94"/>
<dbReference type="Proteomes" id="UP000002494">
    <property type="component" value="Chromosome 8"/>
</dbReference>
<dbReference type="Bgee" id="ENSRNOG00000032063">
    <property type="expression patterns" value="Expressed in brain and 1 other cell type or tissue"/>
</dbReference>
<dbReference type="GO" id="GO:0009897">
    <property type="term" value="C:external side of plasma membrane"/>
    <property type="evidence" value="ECO:0000318"/>
    <property type="project" value="GO_Central"/>
</dbReference>
<dbReference type="GO" id="GO:0005886">
    <property type="term" value="C:plasma membrane"/>
    <property type="evidence" value="ECO:0000266"/>
    <property type="project" value="RGD"/>
</dbReference>
<dbReference type="GO" id="GO:0043235">
    <property type="term" value="C:receptor complex"/>
    <property type="evidence" value="ECO:0000318"/>
    <property type="project" value="GO_Central"/>
</dbReference>
<dbReference type="GO" id="GO:0016167">
    <property type="term" value="F:glial cell-derived neurotrophic factor receptor activity"/>
    <property type="evidence" value="ECO:0000250"/>
    <property type="project" value="UniProtKB"/>
</dbReference>
<dbReference type="GO" id="GO:0005179">
    <property type="term" value="F:hormone activity"/>
    <property type="evidence" value="ECO:0007669"/>
    <property type="project" value="UniProtKB-KW"/>
</dbReference>
<dbReference type="GO" id="GO:0030971">
    <property type="term" value="F:receptor tyrosine kinase binding"/>
    <property type="evidence" value="ECO:0000266"/>
    <property type="project" value="RGD"/>
</dbReference>
<dbReference type="GO" id="GO:0038023">
    <property type="term" value="F:signaling receptor activity"/>
    <property type="evidence" value="ECO:0000318"/>
    <property type="project" value="GO_Central"/>
</dbReference>
<dbReference type="GO" id="GO:0160144">
    <property type="term" value="P:GDF15-GFRAL signaling pathway"/>
    <property type="evidence" value="ECO:0000250"/>
    <property type="project" value="UniProtKB"/>
</dbReference>
<dbReference type="GO" id="GO:0032099">
    <property type="term" value="P:negative regulation of appetite"/>
    <property type="evidence" value="ECO:0000250"/>
    <property type="project" value="UniProtKB"/>
</dbReference>
<dbReference type="GO" id="GO:2001240">
    <property type="term" value="P:negative regulation of extrinsic apoptotic signaling pathway in absence of ligand"/>
    <property type="evidence" value="ECO:0000266"/>
    <property type="project" value="RGD"/>
</dbReference>
<dbReference type="GO" id="GO:0043524">
    <property type="term" value="P:negative regulation of neuron apoptotic process"/>
    <property type="evidence" value="ECO:0000266"/>
    <property type="project" value="RGD"/>
</dbReference>
<dbReference type="GO" id="GO:0007399">
    <property type="term" value="P:nervous system development"/>
    <property type="evidence" value="ECO:0000318"/>
    <property type="project" value="GO_Central"/>
</dbReference>
<dbReference type="GO" id="GO:0043410">
    <property type="term" value="P:positive regulation of MAPK cascade"/>
    <property type="evidence" value="ECO:0000266"/>
    <property type="project" value="RGD"/>
</dbReference>
<dbReference type="GO" id="GO:0051897">
    <property type="term" value="P:positive regulation of phosphatidylinositol 3-kinase/protein kinase B signal transduction"/>
    <property type="evidence" value="ECO:0000266"/>
    <property type="project" value="RGD"/>
</dbReference>
<dbReference type="GO" id="GO:0002023">
    <property type="term" value="P:reduction of food intake in response to dietary excess"/>
    <property type="evidence" value="ECO:0000266"/>
    <property type="project" value="RGD"/>
</dbReference>
<dbReference type="GO" id="GO:1901558">
    <property type="term" value="P:response to metformin"/>
    <property type="evidence" value="ECO:0000266"/>
    <property type="project" value="RGD"/>
</dbReference>
<dbReference type="GO" id="GO:0031098">
    <property type="term" value="P:stress-activated protein kinase signaling cascade"/>
    <property type="evidence" value="ECO:0000266"/>
    <property type="project" value="RGD"/>
</dbReference>
<dbReference type="InterPro" id="IPR016017">
    <property type="entry name" value="GDNF/GAS1"/>
</dbReference>
<dbReference type="InterPro" id="IPR037193">
    <property type="entry name" value="GDNF_alpha"/>
</dbReference>
<dbReference type="InterPro" id="IPR003438">
    <property type="entry name" value="GDNF_rcpt"/>
</dbReference>
<dbReference type="PANTHER" id="PTHR10269:SF1">
    <property type="entry name" value="GDNF FAMILY RECEPTOR ALPHA-LIKE"/>
    <property type="match status" value="1"/>
</dbReference>
<dbReference type="PANTHER" id="PTHR10269">
    <property type="entry name" value="GDNF RECEPTOR ALPHA"/>
    <property type="match status" value="1"/>
</dbReference>
<dbReference type="Pfam" id="PF02351">
    <property type="entry name" value="GDNF"/>
    <property type="match status" value="2"/>
</dbReference>
<dbReference type="SMART" id="SM00907">
    <property type="entry name" value="GDNF"/>
    <property type="match status" value="3"/>
</dbReference>
<dbReference type="SUPFAM" id="SSF110035">
    <property type="entry name" value="GDNF receptor-like"/>
    <property type="match status" value="2"/>
</dbReference>
<proteinExistence type="evidence at transcript level"/>
<gene>
    <name evidence="9 12" type="primary">Gfral</name>
</gene>
<feature type="signal peptide" evidence="3">
    <location>
        <begin position="1"/>
        <end position="19"/>
    </location>
</feature>
<feature type="chain" id="PRO_5003053356" description="GDNF family receptor alpha-like">
    <location>
        <begin position="20"/>
        <end position="394"/>
    </location>
</feature>
<feature type="topological domain" description="Extracellular" evidence="10">
    <location>
        <begin position="20"/>
        <end position="350"/>
    </location>
</feature>
<feature type="transmembrane region" description="Helical" evidence="3">
    <location>
        <begin position="351"/>
        <end position="371"/>
    </location>
</feature>
<feature type="topological domain" description="Cytoplasmic" evidence="10">
    <location>
        <begin position="372"/>
        <end position="394"/>
    </location>
</feature>
<feature type="region of interest" description="Required for interaction with GDF15" evidence="2">
    <location>
        <begin position="150"/>
        <end position="229"/>
    </location>
</feature>
<feature type="glycosylation site" description="N-linked (GlcNAc...) asparagine" evidence="3">
    <location>
        <position position="65"/>
    </location>
</feature>
<feature type="glycosylation site" description="N-linked (GlcNAc...) asparagine" evidence="3">
    <location>
        <position position="101"/>
    </location>
</feature>
<feature type="glycosylation site" description="N-linked (GlcNAc...) asparagine" evidence="3">
    <location>
        <position position="115"/>
    </location>
</feature>
<feature type="disulfide bond" evidence="2">
    <location>
        <begin position="132"/>
        <end position="190"/>
    </location>
</feature>
<feature type="disulfide bond" evidence="2">
    <location>
        <begin position="139"/>
        <end position="145"/>
    </location>
</feature>
<feature type="disulfide bond" evidence="2">
    <location>
        <begin position="156"/>
        <end position="168"/>
    </location>
</feature>
<feature type="disulfide bond" evidence="2">
    <location>
        <begin position="163"/>
        <end position="211"/>
    </location>
</feature>
<feature type="disulfide bond" evidence="2">
    <location>
        <begin position="192"/>
        <end position="199"/>
    </location>
</feature>
<feature type="disulfide bond" evidence="2">
    <location>
        <begin position="221"/>
        <end position="292"/>
    </location>
</feature>
<feature type="disulfide bond" evidence="2">
    <location>
        <begin position="228"/>
        <end position="234"/>
    </location>
</feature>
<feature type="disulfide bond" evidence="2">
    <location>
        <begin position="245"/>
        <end position="276"/>
    </location>
</feature>
<feature type="disulfide bond" evidence="2">
    <location>
        <begin position="253"/>
        <end position="259"/>
    </location>
</feature>
<feature type="disulfide bond" evidence="2">
    <location>
        <begin position="270"/>
        <end position="317"/>
    </location>
</feature>
<feature type="disulfide bond" evidence="2">
    <location>
        <begin position="294"/>
        <end position="305"/>
    </location>
</feature>
<reference key="1">
    <citation type="journal article" date="2004" name="Nature">
        <title>Genome sequence of the Brown Norway rat yields insights into mammalian evolution.</title>
        <authorList>
            <person name="Gibbs R.A."/>
            <person name="Weinstock G.M."/>
            <person name="Metzker M.L."/>
            <person name="Muzny D.M."/>
            <person name="Sodergren E.J."/>
            <person name="Scherer S."/>
            <person name="Scott G."/>
            <person name="Steffen D."/>
            <person name="Worley K.C."/>
            <person name="Burch P.E."/>
            <person name="Okwuonu G."/>
            <person name="Hines S."/>
            <person name="Lewis L."/>
            <person name="Deramo C."/>
            <person name="Delgado O."/>
            <person name="Dugan-Rocha S."/>
            <person name="Miner G."/>
            <person name="Morgan M."/>
            <person name="Hawes A."/>
            <person name="Gill R."/>
            <person name="Holt R.A."/>
            <person name="Adams M.D."/>
            <person name="Amanatides P.G."/>
            <person name="Baden-Tillson H."/>
            <person name="Barnstead M."/>
            <person name="Chin S."/>
            <person name="Evans C.A."/>
            <person name="Ferriera S."/>
            <person name="Fosler C."/>
            <person name="Glodek A."/>
            <person name="Gu Z."/>
            <person name="Jennings D."/>
            <person name="Kraft C.L."/>
            <person name="Nguyen T."/>
            <person name="Pfannkoch C.M."/>
            <person name="Sitter C."/>
            <person name="Sutton G.G."/>
            <person name="Venter J.C."/>
            <person name="Woodage T."/>
            <person name="Smith D."/>
            <person name="Lee H.-M."/>
            <person name="Gustafson E."/>
            <person name="Cahill P."/>
            <person name="Kana A."/>
            <person name="Doucette-Stamm L."/>
            <person name="Weinstock K."/>
            <person name="Fechtel K."/>
            <person name="Weiss R.B."/>
            <person name="Dunn D.M."/>
            <person name="Green E.D."/>
            <person name="Blakesley R.W."/>
            <person name="Bouffard G.G."/>
            <person name="De Jong P.J."/>
            <person name="Osoegawa K."/>
            <person name="Zhu B."/>
            <person name="Marra M."/>
            <person name="Schein J."/>
            <person name="Bosdet I."/>
            <person name="Fjell C."/>
            <person name="Jones S."/>
            <person name="Krzywinski M."/>
            <person name="Mathewson C."/>
            <person name="Siddiqui A."/>
            <person name="Wye N."/>
            <person name="McPherson J."/>
            <person name="Zhao S."/>
            <person name="Fraser C.M."/>
            <person name="Shetty J."/>
            <person name="Shatsman S."/>
            <person name="Geer K."/>
            <person name="Chen Y."/>
            <person name="Abramzon S."/>
            <person name="Nierman W.C."/>
            <person name="Havlak P.H."/>
            <person name="Chen R."/>
            <person name="Durbin K.J."/>
            <person name="Egan A."/>
            <person name="Ren Y."/>
            <person name="Song X.-Z."/>
            <person name="Li B."/>
            <person name="Liu Y."/>
            <person name="Qin X."/>
            <person name="Cawley S."/>
            <person name="Cooney A.J."/>
            <person name="D'Souza L.M."/>
            <person name="Martin K."/>
            <person name="Wu J.Q."/>
            <person name="Gonzalez-Garay M.L."/>
            <person name="Jackson A.R."/>
            <person name="Kalafus K.J."/>
            <person name="McLeod M.P."/>
            <person name="Milosavljevic A."/>
            <person name="Virk D."/>
            <person name="Volkov A."/>
            <person name="Wheeler D.A."/>
            <person name="Zhang Z."/>
            <person name="Bailey J.A."/>
            <person name="Eichler E.E."/>
            <person name="Tuzun E."/>
            <person name="Birney E."/>
            <person name="Mongin E."/>
            <person name="Ureta-Vidal A."/>
            <person name="Woodwark C."/>
            <person name="Zdobnov E."/>
            <person name="Bork P."/>
            <person name="Suyama M."/>
            <person name="Torrents D."/>
            <person name="Alexandersson M."/>
            <person name="Trask B.J."/>
            <person name="Young J.M."/>
            <person name="Huang H."/>
            <person name="Wang H."/>
            <person name="Xing H."/>
            <person name="Daniels S."/>
            <person name="Gietzen D."/>
            <person name="Schmidt J."/>
            <person name="Stevens K."/>
            <person name="Vitt U."/>
            <person name="Wingrove J."/>
            <person name="Camara F."/>
            <person name="Mar Alba M."/>
            <person name="Abril J.F."/>
            <person name="Guigo R."/>
            <person name="Smit A."/>
            <person name="Dubchak I."/>
            <person name="Rubin E.M."/>
            <person name="Couronne O."/>
            <person name="Poliakov A."/>
            <person name="Huebner N."/>
            <person name="Ganten D."/>
            <person name="Goesele C."/>
            <person name="Hummel O."/>
            <person name="Kreitler T."/>
            <person name="Lee Y.-A."/>
            <person name="Monti J."/>
            <person name="Schulz H."/>
            <person name="Zimdahl H."/>
            <person name="Himmelbauer H."/>
            <person name="Lehrach H."/>
            <person name="Jacob H.J."/>
            <person name="Bromberg S."/>
            <person name="Gullings-Handley J."/>
            <person name="Jensen-Seaman M.I."/>
            <person name="Kwitek A.E."/>
            <person name="Lazar J."/>
            <person name="Pasko D."/>
            <person name="Tonellato P.J."/>
            <person name="Twigger S."/>
            <person name="Ponting C.P."/>
            <person name="Duarte J.M."/>
            <person name="Rice S."/>
            <person name="Goodstadt L."/>
            <person name="Beatson S.A."/>
            <person name="Emes R.D."/>
            <person name="Winter E.E."/>
            <person name="Webber C."/>
            <person name="Brandt P."/>
            <person name="Nyakatura G."/>
            <person name="Adetobi M."/>
            <person name="Chiaromonte F."/>
            <person name="Elnitski L."/>
            <person name="Eswara P."/>
            <person name="Hardison R.C."/>
            <person name="Hou M."/>
            <person name="Kolbe D."/>
            <person name="Makova K."/>
            <person name="Miller W."/>
            <person name="Nekrutenko A."/>
            <person name="Riemer C."/>
            <person name="Schwartz S."/>
            <person name="Taylor J."/>
            <person name="Yang S."/>
            <person name="Zhang Y."/>
            <person name="Lindpaintner K."/>
            <person name="Andrews T.D."/>
            <person name="Caccamo M."/>
            <person name="Clamp M."/>
            <person name="Clarke L."/>
            <person name="Curwen V."/>
            <person name="Durbin R.M."/>
            <person name="Eyras E."/>
            <person name="Searle S.M."/>
            <person name="Cooper G.M."/>
            <person name="Batzoglou S."/>
            <person name="Brudno M."/>
            <person name="Sidow A."/>
            <person name="Stone E.A."/>
            <person name="Payseur B.A."/>
            <person name="Bourque G."/>
            <person name="Lopez-Otin C."/>
            <person name="Puente X.S."/>
            <person name="Chakrabarti K."/>
            <person name="Chatterji S."/>
            <person name="Dewey C."/>
            <person name="Pachter L."/>
            <person name="Bray N."/>
            <person name="Yap V.B."/>
            <person name="Caspi A."/>
            <person name="Tesler G."/>
            <person name="Pevzner P.A."/>
            <person name="Haussler D."/>
            <person name="Roskin K.M."/>
            <person name="Baertsch R."/>
            <person name="Clawson H."/>
            <person name="Furey T.S."/>
            <person name="Hinrichs A.S."/>
            <person name="Karolchik D."/>
            <person name="Kent W.J."/>
            <person name="Rosenbloom K.R."/>
            <person name="Trumbower H."/>
            <person name="Weirauch M."/>
            <person name="Cooper D.N."/>
            <person name="Stenson P.D."/>
            <person name="Ma B."/>
            <person name="Brent M."/>
            <person name="Arumugam M."/>
            <person name="Shteynberg D."/>
            <person name="Copley R.R."/>
            <person name="Taylor M.S."/>
            <person name="Riethman H."/>
            <person name="Mudunuri U."/>
            <person name="Peterson J."/>
            <person name="Guyer M."/>
            <person name="Felsenfeld A."/>
            <person name="Old S."/>
            <person name="Mockrin S."/>
            <person name="Collins F.S."/>
        </authorList>
    </citation>
    <scope>NUCLEOTIDE SEQUENCE [LARGE SCALE GENOMIC DNA]</scope>
    <source>
        <strain>Brown Norway</strain>
    </source>
</reference>
<reference key="2">
    <citation type="journal article" date="2017" name="Nat. Med.">
        <title>GFRAL is the receptor for GDF15 and the ligand promotes weight loss in mice and nonhuman primates.</title>
        <authorList>
            <person name="Mullican S.E."/>
            <person name="Lin-Schmidt X."/>
            <person name="Chin C.N."/>
            <person name="Chavez J.A."/>
            <person name="Furman J.L."/>
            <person name="Armstrong A.A."/>
            <person name="Beck S.C."/>
            <person name="South V.J."/>
            <person name="Dinh T.Q."/>
            <person name="Cash-Mason T.D."/>
            <person name="Cavanaugh C.R."/>
            <person name="Nelson S."/>
            <person name="Huang C."/>
            <person name="Hunter M.J."/>
            <person name="Rangwala S.M."/>
        </authorList>
    </citation>
    <scope>TISSUE SPECIFICITY</scope>
</reference>
<reference key="3">
    <citation type="journal article" date="2017" name="Nat. Med.">
        <title>GFRAL is the receptor for GDF15 and is required for the anti-obesity effects of the ligand.</title>
        <authorList>
            <person name="Yang L."/>
            <person name="Chang C.C."/>
            <person name="Sun Z."/>
            <person name="Madsen D."/>
            <person name="Zhu H."/>
            <person name="Padkjaer S.B."/>
            <person name="Wu X."/>
            <person name="Huang T."/>
            <person name="Hultman K."/>
            <person name="Paulsen S.J."/>
            <person name="Wang J."/>
            <person name="Bugge A."/>
            <person name="Frantzen J.B."/>
            <person name="Noergaard P."/>
            <person name="Jeppesen J.F."/>
            <person name="Yang Z."/>
            <person name="Secher A."/>
            <person name="Chen H."/>
            <person name="Li X."/>
            <person name="John L.M."/>
            <person name="Shan B."/>
            <person name="He Z."/>
            <person name="Gao X."/>
            <person name="Su J."/>
            <person name="Hansen K.T."/>
            <person name="Yang W."/>
            <person name="Joergensen S.B."/>
        </authorList>
    </citation>
    <scope>FUNCTION</scope>
    <scope>TISSUE SPECIFICITY</scope>
</reference>
<reference key="4">
    <citation type="journal article" date="2017" name="Nat. Med.">
        <title>The metabolic effects of GDF15 are mediated by the orphan receptor GFRAL.</title>
        <authorList>
            <person name="Emmerson P.J."/>
            <person name="Wang F."/>
            <person name="Du Y."/>
            <person name="Liu Q."/>
            <person name="Pickard R.T."/>
            <person name="Gonciarz M.D."/>
            <person name="Coskun T."/>
            <person name="Hamang M.J."/>
            <person name="Sindelar D.K."/>
            <person name="Ballman K.K."/>
            <person name="Foltz L.A."/>
            <person name="Muppidi A."/>
            <person name="Alsina-Fernandez J."/>
            <person name="Barnard G.C."/>
            <person name="Tang J.X."/>
            <person name="Liu X."/>
            <person name="Mao X."/>
            <person name="Siegel R."/>
            <person name="Sloan J.H."/>
            <person name="Mitchell P.J."/>
            <person name="Zhang B.B."/>
            <person name="Gimeno R.E."/>
            <person name="Shan B."/>
            <person name="Wu X."/>
        </authorList>
    </citation>
    <scope>FUNCTION</scope>
</reference>
<reference key="5">
    <citation type="journal article" date="2020" name="Cell Metab.">
        <title>GDF15 induces anorexia through nausea and emesis.</title>
        <authorList>
            <person name="Borner T."/>
            <person name="Shaulson E.D."/>
            <person name="Ghidewon M.Y."/>
            <person name="Barnett A.B."/>
            <person name="Horn C.C."/>
            <person name="Doyle R.P."/>
            <person name="Grill H.J."/>
            <person name="Hayes M.R."/>
            <person name="De Jonghe B.C."/>
        </authorList>
    </citation>
    <scope>FUNCTION</scope>
</reference>
<reference key="6">
    <citation type="journal article" date="2023" name="Cell Metab.">
        <title>Metformin triggers a kidney GDF15-dependent area postrema axis to regulate food intake and body weight.</title>
        <authorList>
            <person name="Zhang S.Y."/>
            <person name="Bruce K."/>
            <person name="Danaei Z."/>
            <person name="Li R.J.W."/>
            <person name="Barros D.R."/>
            <person name="Kuah R."/>
            <person name="Lim Y.M."/>
            <person name="Mariani L.H."/>
            <person name="Cherney D.Z."/>
            <person name="Chiu J.F.M."/>
            <person name="Reich H.N."/>
            <person name="Lam T.K.T."/>
        </authorList>
    </citation>
    <scope>FUNCTION</scope>
</reference>
<evidence type="ECO:0000250" key="1">
    <source>
        <dbReference type="UniProtKB" id="Q6SJE0"/>
    </source>
</evidence>
<evidence type="ECO:0000250" key="2">
    <source>
        <dbReference type="UniProtKB" id="Q6UXV0"/>
    </source>
</evidence>
<evidence type="ECO:0000255" key="3"/>
<evidence type="ECO:0000269" key="4">
    <source>
    </source>
</evidence>
<evidence type="ECO:0000269" key="5">
    <source>
    </source>
</evidence>
<evidence type="ECO:0000269" key="6">
    <source>
    </source>
</evidence>
<evidence type="ECO:0000269" key="7">
    <source>
    </source>
</evidence>
<evidence type="ECO:0000269" key="8">
    <source>
    </source>
</evidence>
<evidence type="ECO:0000303" key="9">
    <source>
    </source>
</evidence>
<evidence type="ECO:0000305" key="10"/>
<evidence type="ECO:0000305" key="11">
    <source>
    </source>
</evidence>
<evidence type="ECO:0000312" key="12">
    <source>
        <dbReference type="RGD" id="1565220"/>
    </source>
</evidence>
<sequence length="394" mass="43946">MLVFIFLAVRLSSENESSSQTNDCAYFMRQCLTDTDGCKQSWRSMEDACLVSGDSCKINNPLPCNLSIQSLVEKHFQFKGCLCTDDLHCTVNKIFGKKCTNKTDSMKKDNKYKRNLTTPLYHDTGFKQMQSCLEVTEACVGDVVCNAQLALYLKACTANGNLCDVKHCQAAIRFFYQNMPFNTAQMLAFCDCAQSDIPCQQSKETLHSKPCALNVVPPPTCLSVIHTCRNDELCRTYYRTFQTECWPHVAGKCREDETCISMLGKQDLTCSGSDSCRAAYLGTFGTVLQVPCACRSITQGEEPLCMAFQHMLHSKSCFNYPTPNVKDISSYERKHSKEITLTGFNSPFSGELIYVVVCMVVTSGILSLVMLKLRIPSKKRDPAPIEIAGAVIIQ</sequence>
<name>GFRAL_RAT</name>
<organism>
    <name type="scientific">Rattus norvegicus</name>
    <name type="common">Rat</name>
    <dbReference type="NCBI Taxonomy" id="10116"/>
    <lineage>
        <taxon>Eukaryota</taxon>
        <taxon>Metazoa</taxon>
        <taxon>Chordata</taxon>
        <taxon>Craniata</taxon>
        <taxon>Vertebrata</taxon>
        <taxon>Euteleostomi</taxon>
        <taxon>Mammalia</taxon>
        <taxon>Eutheria</taxon>
        <taxon>Euarchontoglires</taxon>
        <taxon>Glires</taxon>
        <taxon>Rodentia</taxon>
        <taxon>Myomorpha</taxon>
        <taxon>Muroidea</taxon>
        <taxon>Muridae</taxon>
        <taxon>Murinae</taxon>
        <taxon>Rattus</taxon>
    </lineage>
</organism>
<protein>
    <recommendedName>
        <fullName evidence="9">GDNF family receptor alpha-like</fullName>
    </recommendedName>
</protein>